<reference key="1">
    <citation type="journal article" date="1997" name="Nature">
        <title>The complete genome sequence of the hyperthermophilic, sulphate-reducing archaeon Archaeoglobus fulgidus.</title>
        <authorList>
            <person name="Klenk H.-P."/>
            <person name="Clayton R.A."/>
            <person name="Tomb J.-F."/>
            <person name="White O."/>
            <person name="Nelson K.E."/>
            <person name="Ketchum K.A."/>
            <person name="Dodson R.J."/>
            <person name="Gwinn M.L."/>
            <person name="Hickey E.K."/>
            <person name="Peterson J.D."/>
            <person name="Richardson D.L."/>
            <person name="Kerlavage A.R."/>
            <person name="Graham D.E."/>
            <person name="Kyrpides N.C."/>
            <person name="Fleischmann R.D."/>
            <person name="Quackenbush J."/>
            <person name="Lee N.H."/>
            <person name="Sutton G.G."/>
            <person name="Gill S.R."/>
            <person name="Kirkness E.F."/>
            <person name="Dougherty B.A."/>
            <person name="McKenney K."/>
            <person name="Adams M.D."/>
            <person name="Loftus B.J."/>
            <person name="Peterson S.N."/>
            <person name="Reich C.I."/>
            <person name="McNeil L.K."/>
            <person name="Badger J.H."/>
            <person name="Glodek A."/>
            <person name="Zhou L."/>
            <person name="Overbeek R."/>
            <person name="Gocayne J.D."/>
            <person name="Weidman J.F."/>
            <person name="McDonald L.A."/>
            <person name="Utterback T.R."/>
            <person name="Cotton M.D."/>
            <person name="Spriggs T."/>
            <person name="Artiach P."/>
            <person name="Kaine B.P."/>
            <person name="Sykes S.M."/>
            <person name="Sadow P.W."/>
            <person name="D'Andrea K.P."/>
            <person name="Bowman C."/>
            <person name="Fujii C."/>
            <person name="Garland S.A."/>
            <person name="Mason T.M."/>
            <person name="Olsen G.J."/>
            <person name="Fraser C.M."/>
            <person name="Smith H.O."/>
            <person name="Woese C.R."/>
            <person name="Venter J.C."/>
        </authorList>
    </citation>
    <scope>NUCLEOTIDE SEQUENCE [LARGE SCALE GENOMIC DNA]</scope>
    <source>
        <strain>ATCC 49558 / DSM 4304 / JCM 9628 / NBRC 100126 / VC-16</strain>
    </source>
</reference>
<gene>
    <name type="ordered locus">AF_1059</name>
</gene>
<sequence>MEKVILEHLQRIEKQLEILNSKIENFLGFEELSEEELKELDEIEAKMEKGEKFVLNDV</sequence>
<name>Y1059_ARCFU</name>
<keyword id="KW-0175">Coiled coil</keyword>
<keyword id="KW-1185">Reference proteome</keyword>
<protein>
    <recommendedName>
        <fullName>Uncharacterized protein AF_1059</fullName>
    </recommendedName>
</protein>
<proteinExistence type="predicted"/>
<feature type="chain" id="PRO_0000127956" description="Uncharacterized protein AF_1059">
    <location>
        <begin position="1"/>
        <end position="58"/>
    </location>
</feature>
<feature type="coiled-coil region" evidence="1">
    <location>
        <begin position="3"/>
        <end position="52"/>
    </location>
</feature>
<dbReference type="EMBL" id="AE000782">
    <property type="protein sequence ID" value="AAB90197.1"/>
    <property type="molecule type" value="Genomic_DNA"/>
</dbReference>
<dbReference type="PIR" id="C69382">
    <property type="entry name" value="C69382"/>
</dbReference>
<dbReference type="SMR" id="O29203"/>
<dbReference type="PaxDb" id="224325-AF_1059"/>
<dbReference type="EnsemblBacteria" id="AAB90197">
    <property type="protein sequence ID" value="AAB90197"/>
    <property type="gene ID" value="AF_1059"/>
</dbReference>
<dbReference type="KEGG" id="afu:AF_1059"/>
<dbReference type="eggNOG" id="arCOG12201">
    <property type="taxonomic scope" value="Archaea"/>
</dbReference>
<dbReference type="HOGENOM" id="CLU_3002988_0_0_2"/>
<dbReference type="Proteomes" id="UP000002199">
    <property type="component" value="Chromosome"/>
</dbReference>
<evidence type="ECO:0000255" key="1"/>
<organism>
    <name type="scientific">Archaeoglobus fulgidus (strain ATCC 49558 / DSM 4304 / JCM 9628 / NBRC 100126 / VC-16)</name>
    <dbReference type="NCBI Taxonomy" id="224325"/>
    <lineage>
        <taxon>Archaea</taxon>
        <taxon>Methanobacteriati</taxon>
        <taxon>Methanobacteriota</taxon>
        <taxon>Archaeoglobi</taxon>
        <taxon>Archaeoglobales</taxon>
        <taxon>Archaeoglobaceae</taxon>
        <taxon>Archaeoglobus</taxon>
    </lineage>
</organism>
<accession>O29203</accession>